<gene>
    <name type="primary">rps28e</name>
    <name type="ordered locus">PH1495.2</name>
    <name type="ORF">PHS040</name>
</gene>
<sequence>MAEDEGYPAEVIEIIGRTGTTGDVTQVKVRILEGRDKGRVIRRNVRGPVRVGDILILRETEREAREIKSRR</sequence>
<dbReference type="EMBL" id="BA000001">
    <property type="protein sequence ID" value="BAA30603.1"/>
    <property type="molecule type" value="Genomic_DNA"/>
</dbReference>
<dbReference type="PIR" id="C71025">
    <property type="entry name" value="C71025"/>
</dbReference>
<dbReference type="RefSeq" id="WP_010867791.1">
    <property type="nucleotide sequence ID" value="NC_000961.1"/>
</dbReference>
<dbReference type="PDB" id="1NY4">
    <property type="method" value="NMR"/>
    <property type="chains" value="A=1-71"/>
</dbReference>
<dbReference type="PDBsum" id="1NY4"/>
<dbReference type="SMR" id="P61030"/>
<dbReference type="STRING" id="70601.gene:9378477"/>
<dbReference type="EnsemblBacteria" id="BAA30603">
    <property type="protein sequence ID" value="BAA30603"/>
    <property type="gene ID" value="BAA30603"/>
</dbReference>
<dbReference type="KEGG" id="pho:PHS040"/>
<dbReference type="eggNOG" id="arCOG04314">
    <property type="taxonomic scope" value="Archaea"/>
</dbReference>
<dbReference type="OrthoDB" id="7620at2157"/>
<dbReference type="EvolutionaryTrace" id="P61030"/>
<dbReference type="Proteomes" id="UP000000752">
    <property type="component" value="Chromosome"/>
</dbReference>
<dbReference type="GO" id="GO:0022627">
    <property type="term" value="C:cytosolic small ribosomal subunit"/>
    <property type="evidence" value="ECO:0007669"/>
    <property type="project" value="TreeGrafter"/>
</dbReference>
<dbReference type="GO" id="GO:0003735">
    <property type="term" value="F:structural constituent of ribosome"/>
    <property type="evidence" value="ECO:0007669"/>
    <property type="project" value="InterPro"/>
</dbReference>
<dbReference type="GO" id="GO:0030490">
    <property type="term" value="P:maturation of SSU-rRNA"/>
    <property type="evidence" value="ECO:0007669"/>
    <property type="project" value="TreeGrafter"/>
</dbReference>
<dbReference type="GO" id="GO:0000028">
    <property type="term" value="P:ribosomal small subunit assembly"/>
    <property type="evidence" value="ECO:0007669"/>
    <property type="project" value="TreeGrafter"/>
</dbReference>
<dbReference type="GO" id="GO:0006412">
    <property type="term" value="P:translation"/>
    <property type="evidence" value="ECO:0007669"/>
    <property type="project" value="UniProtKB-UniRule"/>
</dbReference>
<dbReference type="CDD" id="cd04457">
    <property type="entry name" value="S1_S28E"/>
    <property type="match status" value="1"/>
</dbReference>
<dbReference type="FunFam" id="2.40.50.140:FF:000145">
    <property type="entry name" value="30S ribosomal protein S28e"/>
    <property type="match status" value="1"/>
</dbReference>
<dbReference type="Gene3D" id="2.40.50.140">
    <property type="entry name" value="Nucleic acid-binding proteins"/>
    <property type="match status" value="1"/>
</dbReference>
<dbReference type="HAMAP" id="MF_00292">
    <property type="entry name" value="Ribosomal_eS28"/>
    <property type="match status" value="1"/>
</dbReference>
<dbReference type="InterPro" id="IPR012340">
    <property type="entry name" value="NA-bd_OB-fold"/>
</dbReference>
<dbReference type="InterPro" id="IPR000289">
    <property type="entry name" value="Ribosomal_eS28"/>
</dbReference>
<dbReference type="InterPro" id="IPR028626">
    <property type="entry name" value="Ribosomal_eS28_CS"/>
</dbReference>
<dbReference type="NCBIfam" id="NF003080">
    <property type="entry name" value="PRK04007.1"/>
    <property type="match status" value="1"/>
</dbReference>
<dbReference type="PANTHER" id="PTHR10769">
    <property type="entry name" value="40S RIBOSOMAL PROTEIN S28"/>
    <property type="match status" value="1"/>
</dbReference>
<dbReference type="PANTHER" id="PTHR10769:SF3">
    <property type="entry name" value="SMALL RIBOSOMAL SUBUNIT PROTEIN ES28"/>
    <property type="match status" value="1"/>
</dbReference>
<dbReference type="Pfam" id="PF01200">
    <property type="entry name" value="Ribosomal_S28e"/>
    <property type="match status" value="1"/>
</dbReference>
<dbReference type="SUPFAM" id="SSF50249">
    <property type="entry name" value="Nucleic acid-binding proteins"/>
    <property type="match status" value="1"/>
</dbReference>
<dbReference type="PROSITE" id="PS00961">
    <property type="entry name" value="RIBOSOMAL_S28E"/>
    <property type="match status" value="1"/>
</dbReference>
<keyword id="KW-0002">3D-structure</keyword>
<keyword id="KW-0687">Ribonucleoprotein</keyword>
<keyword id="KW-0689">Ribosomal protein</keyword>
<evidence type="ECO:0000305" key="1"/>
<evidence type="ECO:0007829" key="2">
    <source>
        <dbReference type="PDB" id="1NY4"/>
    </source>
</evidence>
<name>RS28_PYRHO</name>
<comment type="similarity">
    <text evidence="1">Belongs to the eukaryotic ribosomal protein eS28 family.</text>
</comment>
<organism>
    <name type="scientific">Pyrococcus horikoshii (strain ATCC 700860 / DSM 12428 / JCM 9974 / NBRC 100139 / OT-3)</name>
    <dbReference type="NCBI Taxonomy" id="70601"/>
    <lineage>
        <taxon>Archaea</taxon>
        <taxon>Methanobacteriati</taxon>
        <taxon>Methanobacteriota</taxon>
        <taxon>Thermococci</taxon>
        <taxon>Thermococcales</taxon>
        <taxon>Thermococcaceae</taxon>
        <taxon>Pyrococcus</taxon>
    </lineage>
</organism>
<proteinExistence type="evidence at protein level"/>
<reference key="1">
    <citation type="journal article" date="1998" name="DNA Res.">
        <title>Complete sequence and gene organization of the genome of a hyper-thermophilic archaebacterium, Pyrococcus horikoshii OT3.</title>
        <authorList>
            <person name="Kawarabayasi Y."/>
            <person name="Sawada M."/>
            <person name="Horikawa H."/>
            <person name="Haikawa Y."/>
            <person name="Hino Y."/>
            <person name="Yamamoto S."/>
            <person name="Sekine M."/>
            <person name="Baba S."/>
            <person name="Kosugi H."/>
            <person name="Hosoyama A."/>
            <person name="Nagai Y."/>
            <person name="Sakai M."/>
            <person name="Ogura K."/>
            <person name="Otsuka R."/>
            <person name="Nakazawa H."/>
            <person name="Takamiya M."/>
            <person name="Ohfuku Y."/>
            <person name="Funahashi T."/>
            <person name="Tanaka T."/>
            <person name="Kudoh Y."/>
            <person name="Yamazaki J."/>
            <person name="Kushida N."/>
            <person name="Oguchi A."/>
            <person name="Aoki K."/>
            <person name="Yoshizawa T."/>
            <person name="Nakamura Y."/>
            <person name="Robb F.T."/>
            <person name="Horikoshi K."/>
            <person name="Masuchi Y."/>
            <person name="Shizuya H."/>
            <person name="Kikuchi H."/>
        </authorList>
    </citation>
    <scope>NUCLEOTIDE SEQUENCE [LARGE SCALE GENOMIC DNA]</scope>
    <source>
        <strain>ATCC 700860 / DSM 12428 / JCM 9974 / NBRC 100139 / OT-3</strain>
    </source>
</reference>
<reference key="2">
    <citation type="journal article" date="2003" name="Protein Sci.">
        <title>Solution NMR structure of the 30S ribosomal protein S28E from Pyrococcus horikoshii.</title>
        <authorList>
            <person name="Aramini J.M."/>
            <person name="Huang Y.J."/>
            <person name="Cort J.R."/>
            <person name="Goldsmith-Fischman S."/>
            <person name="Xiao R."/>
            <person name="Shih L.Y."/>
            <person name="Ho C.K."/>
            <person name="Liu J."/>
            <person name="Rost B."/>
            <person name="Honig B."/>
            <person name="Kennedy M.A."/>
            <person name="Acton T.B."/>
            <person name="Montelione G.T."/>
        </authorList>
    </citation>
    <scope>STRUCTURE BY NMR</scope>
</reference>
<accession>P61030</accession>
<accession>O74014</accession>
<feature type="chain" id="PRO_0000136858" description="Small ribosomal subunit protein eS28">
    <location>
        <begin position="1"/>
        <end position="71"/>
    </location>
</feature>
<feature type="strand" evidence="2">
    <location>
        <begin position="8"/>
        <end position="14"/>
    </location>
</feature>
<feature type="strand" evidence="2">
    <location>
        <begin position="20"/>
        <end position="36"/>
    </location>
</feature>
<feature type="strand" evidence="2">
    <location>
        <begin position="40"/>
        <end position="47"/>
    </location>
</feature>
<feature type="strand" evidence="2">
    <location>
        <begin position="54"/>
        <end position="56"/>
    </location>
</feature>
<protein>
    <recommendedName>
        <fullName evidence="1">Small ribosomal subunit protein eS28</fullName>
    </recommendedName>
    <alternativeName>
        <fullName>30S ribosomal protein S28e</fullName>
    </alternativeName>
</protein>